<reference key="1">
    <citation type="journal article" date="2009" name="Genome Res.">
        <title>Newly introduced genomic prophage islands are critical determinants of in vivo competitiveness in the Liverpool epidemic strain of Pseudomonas aeruginosa.</title>
        <authorList>
            <person name="Winstanley C."/>
            <person name="Langille M.G.I."/>
            <person name="Fothergill J.L."/>
            <person name="Kukavica-Ibrulj I."/>
            <person name="Paradis-Bleau C."/>
            <person name="Sanschagrin F."/>
            <person name="Thomson N.R."/>
            <person name="Winsor G.L."/>
            <person name="Quail M.A."/>
            <person name="Lennard N."/>
            <person name="Bignell A."/>
            <person name="Clarke L."/>
            <person name="Seeger K."/>
            <person name="Saunders D."/>
            <person name="Harris D."/>
            <person name="Parkhill J."/>
            <person name="Hancock R.E.W."/>
            <person name="Brinkman F.S.L."/>
            <person name="Levesque R.C."/>
        </authorList>
    </citation>
    <scope>NUCLEOTIDE SEQUENCE [LARGE SCALE GENOMIC DNA]</scope>
    <source>
        <strain>LESB58</strain>
    </source>
</reference>
<dbReference type="EC" id="2.3.3.9" evidence="1"/>
<dbReference type="EMBL" id="FM209186">
    <property type="protein sequence ID" value="CAW25205.1"/>
    <property type="molecule type" value="Genomic_DNA"/>
</dbReference>
<dbReference type="RefSeq" id="WP_003105217.1">
    <property type="nucleotide sequence ID" value="NC_011770.1"/>
</dbReference>
<dbReference type="SMR" id="B7V467"/>
<dbReference type="KEGG" id="pag:PLES_04781"/>
<dbReference type="HOGENOM" id="CLU_028446_1_0_6"/>
<dbReference type="UniPathway" id="UPA00703">
    <property type="reaction ID" value="UER00720"/>
</dbReference>
<dbReference type="GO" id="GO:0005829">
    <property type="term" value="C:cytosol"/>
    <property type="evidence" value="ECO:0007669"/>
    <property type="project" value="TreeGrafter"/>
</dbReference>
<dbReference type="GO" id="GO:0000287">
    <property type="term" value="F:magnesium ion binding"/>
    <property type="evidence" value="ECO:0007669"/>
    <property type="project" value="TreeGrafter"/>
</dbReference>
<dbReference type="GO" id="GO:0004474">
    <property type="term" value="F:malate synthase activity"/>
    <property type="evidence" value="ECO:0007669"/>
    <property type="project" value="UniProtKB-UniRule"/>
</dbReference>
<dbReference type="GO" id="GO:0009436">
    <property type="term" value="P:glyoxylate catabolic process"/>
    <property type="evidence" value="ECO:0007669"/>
    <property type="project" value="TreeGrafter"/>
</dbReference>
<dbReference type="GO" id="GO:0006097">
    <property type="term" value="P:glyoxylate cycle"/>
    <property type="evidence" value="ECO:0007669"/>
    <property type="project" value="UniProtKB-UniRule"/>
</dbReference>
<dbReference type="GO" id="GO:0006099">
    <property type="term" value="P:tricarboxylic acid cycle"/>
    <property type="evidence" value="ECO:0007669"/>
    <property type="project" value="UniProtKB-KW"/>
</dbReference>
<dbReference type="CDD" id="cd00728">
    <property type="entry name" value="malate_synt_G"/>
    <property type="match status" value="1"/>
</dbReference>
<dbReference type="FunFam" id="3.20.20.360:FF:000002">
    <property type="entry name" value="Malate synthase G"/>
    <property type="match status" value="1"/>
</dbReference>
<dbReference type="Gene3D" id="3.20.20.360">
    <property type="entry name" value="Malate synthase, domain 3"/>
    <property type="match status" value="2"/>
</dbReference>
<dbReference type="Gene3D" id="1.20.1220.12">
    <property type="entry name" value="Malate synthase, domain III"/>
    <property type="match status" value="1"/>
</dbReference>
<dbReference type="HAMAP" id="MF_00641">
    <property type="entry name" value="Malate_synth_G"/>
    <property type="match status" value="1"/>
</dbReference>
<dbReference type="InterPro" id="IPR044856">
    <property type="entry name" value="Malate_synth_C_sf"/>
</dbReference>
<dbReference type="InterPro" id="IPR011076">
    <property type="entry name" value="Malate_synth_sf"/>
</dbReference>
<dbReference type="InterPro" id="IPR001465">
    <property type="entry name" value="Malate_synthase_TIM"/>
</dbReference>
<dbReference type="InterPro" id="IPR006253">
    <property type="entry name" value="Malate_synthG"/>
</dbReference>
<dbReference type="InterPro" id="IPR048355">
    <property type="entry name" value="MS_C"/>
</dbReference>
<dbReference type="InterPro" id="IPR048356">
    <property type="entry name" value="MS_N"/>
</dbReference>
<dbReference type="InterPro" id="IPR046363">
    <property type="entry name" value="MS_N_TIM-barrel_dom"/>
</dbReference>
<dbReference type="InterPro" id="IPR048357">
    <property type="entry name" value="MSG_insertion"/>
</dbReference>
<dbReference type="NCBIfam" id="TIGR01345">
    <property type="entry name" value="malate_syn_G"/>
    <property type="match status" value="1"/>
</dbReference>
<dbReference type="NCBIfam" id="NF002825">
    <property type="entry name" value="PRK02999.1"/>
    <property type="match status" value="1"/>
</dbReference>
<dbReference type="PANTHER" id="PTHR42739">
    <property type="entry name" value="MALATE SYNTHASE G"/>
    <property type="match status" value="1"/>
</dbReference>
<dbReference type="PANTHER" id="PTHR42739:SF1">
    <property type="entry name" value="MALATE SYNTHASE G"/>
    <property type="match status" value="1"/>
</dbReference>
<dbReference type="Pfam" id="PF20659">
    <property type="entry name" value="MS_C"/>
    <property type="match status" value="1"/>
</dbReference>
<dbReference type="Pfam" id="PF20656">
    <property type="entry name" value="MS_N"/>
    <property type="match status" value="1"/>
</dbReference>
<dbReference type="Pfam" id="PF01274">
    <property type="entry name" value="MS_TIM-barrel"/>
    <property type="match status" value="1"/>
</dbReference>
<dbReference type="Pfam" id="PF20658">
    <property type="entry name" value="MSG_insertion"/>
    <property type="match status" value="1"/>
</dbReference>
<dbReference type="SUPFAM" id="SSF51645">
    <property type="entry name" value="Malate synthase G"/>
    <property type="match status" value="1"/>
</dbReference>
<feature type="chain" id="PRO_1000130894" description="Malate synthase G">
    <location>
        <begin position="1"/>
        <end position="725"/>
    </location>
</feature>
<feature type="active site" description="Proton acceptor" evidence="1">
    <location>
        <position position="340"/>
    </location>
</feature>
<feature type="active site" description="Proton donor" evidence="1">
    <location>
        <position position="631"/>
    </location>
</feature>
<feature type="binding site" evidence="1">
    <location>
        <position position="118"/>
    </location>
    <ligand>
        <name>acetyl-CoA</name>
        <dbReference type="ChEBI" id="CHEBI:57288"/>
    </ligand>
</feature>
<feature type="binding site" evidence="1">
    <location>
        <begin position="125"/>
        <end position="126"/>
    </location>
    <ligand>
        <name>acetyl-CoA</name>
        <dbReference type="ChEBI" id="CHEBI:57288"/>
    </ligand>
</feature>
<feature type="binding site" evidence="1">
    <location>
        <position position="276"/>
    </location>
    <ligand>
        <name>acetyl-CoA</name>
        <dbReference type="ChEBI" id="CHEBI:57288"/>
    </ligand>
</feature>
<feature type="binding site" evidence="1">
    <location>
        <position position="313"/>
    </location>
    <ligand>
        <name>acetyl-CoA</name>
        <dbReference type="ChEBI" id="CHEBI:57288"/>
    </ligand>
</feature>
<feature type="binding site" evidence="1">
    <location>
        <position position="340"/>
    </location>
    <ligand>
        <name>glyoxylate</name>
        <dbReference type="ChEBI" id="CHEBI:36655"/>
    </ligand>
</feature>
<feature type="binding site" evidence="1">
    <location>
        <position position="432"/>
    </location>
    <ligand>
        <name>glyoxylate</name>
        <dbReference type="ChEBI" id="CHEBI:36655"/>
    </ligand>
</feature>
<feature type="binding site" evidence="1">
    <location>
        <position position="432"/>
    </location>
    <ligand>
        <name>Mg(2+)</name>
        <dbReference type="ChEBI" id="CHEBI:18420"/>
    </ligand>
</feature>
<feature type="binding site" evidence="1">
    <location>
        <begin position="457"/>
        <end position="460"/>
    </location>
    <ligand>
        <name>glyoxylate</name>
        <dbReference type="ChEBI" id="CHEBI:36655"/>
    </ligand>
</feature>
<feature type="binding site" evidence="1">
    <location>
        <position position="460"/>
    </location>
    <ligand>
        <name>Mg(2+)</name>
        <dbReference type="ChEBI" id="CHEBI:18420"/>
    </ligand>
</feature>
<feature type="binding site" evidence="1">
    <location>
        <position position="541"/>
    </location>
    <ligand>
        <name>acetyl-CoA</name>
        <dbReference type="ChEBI" id="CHEBI:57288"/>
    </ligand>
</feature>
<feature type="modified residue" description="Cysteine sulfenic acid (-SOH)" evidence="1">
    <location>
        <position position="617"/>
    </location>
</feature>
<evidence type="ECO:0000255" key="1">
    <source>
        <dbReference type="HAMAP-Rule" id="MF_00641"/>
    </source>
</evidence>
<sequence>MTERVQVGGLQVAKVLFDFVNNEAIPGTGVSADTFWTGAEAVINDLAPKNKALLAKRDELQAKIDGWHQARAGQAHDAAAYKAFLEEIGYLLPEAEDFQAGTQNVDDEIARMAGPQLVVPVMNARFALNASNARWGSLYDALYGTDVISEEGGAEKGKGYNKVRGDKVIAFARAFLDEAAPLESGSHVDATSYSVKNGALVVALKNGSETGLKNAGQFLAFQGDAAKPQAVLLKHNGLHFEIQIDPSSPVGQTDAAGVKDVLMEAALTTIMDCEDSVAAVDADDKVVIYRNWLGLMKGDLAEEVSKGGSTFTRTMNPDRVYTRADGSELTLHGRSLLFVRNVGHLMTNDAILDKDGNEVPEGIQDGLFTSLIAIHDLNGNTSRKNSRTGSVYIVKPKMHGPEEAAFTNELFGRVEDVLGLPRNTLKVGIMDEERRTTVNLKACIKAAKDRVVFINTGFLDRTGDEIHTSMEAGAVVRKGAMKSEKWIGAYENNNVDVGLATGLQGKAQIGKGMWAMPDLMAAMLEQKIGHPLAGANTAWVPSPTAATLHALHYHKVDVFARQAELAKRTPASVDDILTIPLAPNTNWTAEEIKNEVDNNAQGILGYVVRWIDQGVGCSKVPDINDVGLMEDRATLRISSQLLANWLRHGVISQEQVVESLKRMAVVVDRQNASDPSYRPMAPNFDDNVAFQAALELVVEGTRQPNGYTEPVLHRRRREFKAKNGL</sequence>
<proteinExistence type="inferred from homology"/>
<accession>B7V467</accession>
<comment type="function">
    <text evidence="1">Involved in the glycolate utilization. Catalyzes the condensation and subsequent hydrolysis of acetyl-coenzyme A (acetyl-CoA) and glyoxylate to form malate and CoA.</text>
</comment>
<comment type="catalytic activity">
    <reaction evidence="1">
        <text>glyoxylate + acetyl-CoA + H2O = (S)-malate + CoA + H(+)</text>
        <dbReference type="Rhea" id="RHEA:18181"/>
        <dbReference type="ChEBI" id="CHEBI:15377"/>
        <dbReference type="ChEBI" id="CHEBI:15378"/>
        <dbReference type="ChEBI" id="CHEBI:15589"/>
        <dbReference type="ChEBI" id="CHEBI:36655"/>
        <dbReference type="ChEBI" id="CHEBI:57287"/>
        <dbReference type="ChEBI" id="CHEBI:57288"/>
        <dbReference type="EC" id="2.3.3.9"/>
    </reaction>
</comment>
<comment type="cofactor">
    <cofactor evidence="1">
        <name>Mg(2+)</name>
        <dbReference type="ChEBI" id="CHEBI:18420"/>
    </cofactor>
</comment>
<comment type="pathway">
    <text evidence="1">Carbohydrate metabolism; glyoxylate cycle; (S)-malate from isocitrate: step 2/2.</text>
</comment>
<comment type="subunit">
    <text evidence="1">Monomer.</text>
</comment>
<comment type="subcellular location">
    <subcellularLocation>
        <location evidence="1">Cytoplasm</location>
    </subcellularLocation>
</comment>
<comment type="similarity">
    <text evidence="1">Belongs to the malate synthase family. GlcB subfamily.</text>
</comment>
<organism>
    <name type="scientific">Pseudomonas aeruginosa (strain LESB58)</name>
    <dbReference type="NCBI Taxonomy" id="557722"/>
    <lineage>
        <taxon>Bacteria</taxon>
        <taxon>Pseudomonadati</taxon>
        <taxon>Pseudomonadota</taxon>
        <taxon>Gammaproteobacteria</taxon>
        <taxon>Pseudomonadales</taxon>
        <taxon>Pseudomonadaceae</taxon>
        <taxon>Pseudomonas</taxon>
    </lineage>
</organism>
<name>MASZ_PSEA8</name>
<keyword id="KW-0963">Cytoplasm</keyword>
<keyword id="KW-0329">Glyoxylate bypass</keyword>
<keyword id="KW-0460">Magnesium</keyword>
<keyword id="KW-0479">Metal-binding</keyword>
<keyword id="KW-0558">Oxidation</keyword>
<keyword id="KW-0808">Transferase</keyword>
<keyword id="KW-0816">Tricarboxylic acid cycle</keyword>
<protein>
    <recommendedName>
        <fullName evidence="1">Malate synthase G</fullName>
        <ecNumber evidence="1">2.3.3.9</ecNumber>
    </recommendedName>
</protein>
<gene>
    <name evidence="1" type="primary">glcB</name>
    <name type="ordered locus">PLES_04781</name>
</gene>